<keyword id="KW-0325">Glycoprotein</keyword>
<keyword id="KW-0349">Heme</keyword>
<keyword id="KW-0408">Iron</keyword>
<keyword id="KW-0472">Membrane</keyword>
<keyword id="KW-0479">Metal-binding</keyword>
<keyword id="KW-0503">Monooxygenase</keyword>
<keyword id="KW-0560">Oxidoreductase</keyword>
<keyword id="KW-1185">Reference proteome</keyword>
<keyword id="KW-0812">Transmembrane</keyword>
<keyword id="KW-1133">Transmembrane helix</keyword>
<sequence length="515" mass="58780">MDFQIISRFTDGGDFQWTKFGTAAFLAVLLSALAFLSYTPRVHQKSPAFTSHKLPFIGSLGFTTEQWKARNWWKRATAESKTGNFSFWLGQRHVVGVTGEAARKMFFTHEALDFVSGALIRPINIHFWPPIHDIFRPDSKSRSKNTYFLRRLYELQSTEQLNHYLPQLLKDARVGMAGLSRVTKPSVSCWETVFTQDVRLLCTDEIVADSKLLATFGRQVETLLFTFSHYNVCFPWLPSPSYYKRRQARYALYNLMEDIVNKRLKNGARGPNDPVQILLDYNDKVDHIIEFFISVLFIAPANSRIIGGQMLNIMSIYRDWQEKVYADIKAAAAAHSPDKNAPLVDQLAFIPLHAWENSFPSIDLCLQETIRMWTSFSMARLNLSPNPIPIPGSDEVIPGNTFVCYNSTEVNFSDSLYPDPKKFDPARFLDGREEFRNEAYGFLGWGRGRHPCPGMRWAKLQQNIIIAYAVAMYDWSSCDETGKPTPQAVHVKELNAARGTVLPSAYCKLVPREKV</sequence>
<name>NSRP_ASPN1</name>
<reference key="1">
    <citation type="journal article" date="2018" name="Proc. Natl. Acad. Sci. U.S.A.">
        <title>Linking secondary metabolites to gene clusters through genome sequencing of six diverse Aspergillus species.</title>
        <authorList>
            <person name="Kjaerboelling I."/>
            <person name="Vesth T.C."/>
            <person name="Frisvad J.C."/>
            <person name="Nybo J.L."/>
            <person name="Theobald S."/>
            <person name="Kuo A."/>
            <person name="Bowyer P."/>
            <person name="Matsuda Y."/>
            <person name="Mondo S."/>
            <person name="Lyhne E.K."/>
            <person name="Kogle M.E."/>
            <person name="Clum A."/>
            <person name="Lipzen A."/>
            <person name="Salamov A."/>
            <person name="Ngan C.Y."/>
            <person name="Daum C."/>
            <person name="Chiniquy J."/>
            <person name="Barry K."/>
            <person name="LaButti K."/>
            <person name="Haridas S."/>
            <person name="Simmons B.A."/>
            <person name="Magnuson J.K."/>
            <person name="Mortensen U.H."/>
            <person name="Larsen T.O."/>
            <person name="Grigoriev I.V."/>
            <person name="Baker S.E."/>
            <person name="Andersen M.R."/>
        </authorList>
    </citation>
    <scope>NUCLEOTIDE SEQUENCE [LARGE SCALE GENOMIC DNA]</scope>
    <source>
        <strain>IBT 16806</strain>
    </source>
</reference>
<reference key="2">
    <citation type="journal article" date="2018" name="Org. Lett.">
        <title>Genetic characterization of neosartorin biosynthesis provides insight into heterodimeric natural product generation.</title>
        <authorList>
            <person name="Matsuda Y."/>
            <person name="Gotfredsen C.H."/>
            <person name="Larsen T.O."/>
        </authorList>
    </citation>
    <scope>FUNCTION</scope>
    <scope>DISRUPTION PHENOTYPE</scope>
    <scope>PATHWAY</scope>
</reference>
<reference key="3">
    <citation type="journal article" date="2020" name="Org. Lett.">
        <title>Unraveling the fungal strategy for tetrahydroxanthone biosynthesis and diversification.</title>
        <authorList>
            <person name="Wei X."/>
            <person name="Matsuda Y."/>
        </authorList>
    </citation>
    <scope>FUNCTION</scope>
    <scope>PATHWAY</scope>
</reference>
<reference key="4">
    <citation type="journal article" date="2021" name="J. Nat. Prod.">
        <title>Heterologous biosynthesis of tetrahydroxanthone dimers: determination of key factors for selective or divergent synthesis.</title>
        <authorList>
            <person name="Wei X."/>
            <person name="Chen X."/>
            <person name="Chen L."/>
            <person name="Yan D."/>
            <person name="Wang W.G."/>
            <person name="Matsuda Y."/>
        </authorList>
    </citation>
    <scope>FUNCTION</scope>
</reference>
<proteinExistence type="inferred from homology"/>
<gene>
    <name evidence="7" type="primary">nsrP</name>
    <name type="ORF">P174DRAFT_372675</name>
</gene>
<feature type="chain" id="PRO_0000453477" description="Cytochrome P450 monooxygenase nsrP">
    <location>
        <begin position="1"/>
        <end position="515"/>
    </location>
</feature>
<feature type="transmembrane region" description="Helical" evidence="2">
    <location>
        <begin position="20"/>
        <end position="40"/>
    </location>
</feature>
<feature type="binding site" description="axial binding residue" evidence="1">
    <location>
        <position position="452"/>
    </location>
    <ligand>
        <name>heme</name>
        <dbReference type="ChEBI" id="CHEBI:30413"/>
    </ligand>
    <ligandPart>
        <name>Fe</name>
        <dbReference type="ChEBI" id="CHEBI:18248"/>
    </ligandPart>
</feature>
<feature type="glycosylation site" description="N-linked (GlcNAc...) asparagine" evidence="3">
    <location>
        <position position="84"/>
    </location>
</feature>
<feature type="glycosylation site" description="N-linked (GlcNAc...) asparagine" evidence="3">
    <location>
        <position position="406"/>
    </location>
</feature>
<feature type="glycosylation site" description="N-linked (GlcNAc...) asparagine" evidence="3">
    <location>
        <position position="411"/>
    </location>
</feature>
<comment type="function">
    <text evidence="4 5 6">Cytochrome P450 monooxygenase; part of the gene cluster that mediates the biosynthesis of the tetrahydroxanthone dimer neosartorin, which exhibits antibacterial activity (PubMed:30394754, PubMed:32105084, PubMed:33891392). The two different monomeric units appear to be synthesized by the same set of enzymes, among which the Baeyer-Villiger monooxygenase nsrF is the key enzyme for the divergence of the biosynthetic routes (PubMed:32105084). The pathway begins with the synthesis of atrochrysone thioester by the polyketide synthase nsrB (PubMed:32105084). The atrochrysone carboxyl ACP thioesterase nsrC then breaks the thioester bond and releases the atrochrysone carboxylic acid from AacuL (PubMed:32105084). Atrochrysone carboxylic acid is decarboxylated by the decarboxylase nsrE, and oxidized by the anthrone oxygenase nsrD to yield emodin (PubMed:32105084). Emodin is then reduced to emodin hydroquinone by the oxidoreductase nsrR (PubMed:32105084). A-ring reduction by the short chain dehydrogenase nsrJ, dehydration by the scytalone dehydratase-like protein nsrI and probable spontaneous re-oxidation, results in overall deoxygenation to chrysophanol (PubMed:32105084). The Baeyer-Villiger monooxygenase nsrF accepts chrysophanol as a substrate to insert one oxygen atom at two different positions to yield the precursors of both monomric units (PubMed:30394754, PubMed:32105084, PubMed:33891392). NsrF is promiscuous/flexible in interacting with the 2 (non methylated and methylated) aromatic rings of chrysophanol, thus diverging the biosynthetic pathway at this point (PubMed:30394754, PubMed:32105084, PubMed:33891392). After the hydrolysis of the lactones, methylesterification by the methyltransferase nsrG yields respectively moniliphenone and 2,2',6'-trihydroxy-4-methyl-6-methoxya-cyldiphenylmethanone (PubMed:30394754, PubMed:32105084). The next steps are the hydroxylation by the FAD-dependent monooxygenase nsrK, followed by isomerization by the monooxygenase nsrQ (PubMed:32105084). The short chain dehydrogenase/reductase nsrO then catalyzes the C-5 ketoreduction to give the xanthone skeleton of blennolide C and 5-acetylblennolide A (PubMed:32105084). The acetyltransferase nsrL has a strict substrate specificity and uses only blennolide A but not blennolide C to yield 5-acetylblennolide A as the single-acetylated product (PubMed:30394754). In the final step of the biosynthesis, the heterodimerization of the 2 xanthones, blennolide C and 5-acetylblennolide A, is catalyzed by the cytochrome P450 monooxygenase nsrP (PubMed:30394754). NsrP can utilize at least three different xanthones as its substrates to perform the dimerization reaction (PubMed:30394754).</text>
</comment>
<comment type="cofactor">
    <cofactor evidence="1">
        <name>heme</name>
        <dbReference type="ChEBI" id="CHEBI:30413"/>
    </cofactor>
</comment>
<comment type="pathway">
    <text evidence="4">Secondary metabolite biosynthesis.</text>
</comment>
<comment type="subcellular location">
    <subcellularLocation>
        <location evidence="2">Membrane</location>
        <topology evidence="2">Single-pass membrane protein</topology>
    </subcellularLocation>
</comment>
<comment type="disruption phenotype">
    <text evidence="4">Impairs the production of neosartorin and accumulates blennolide C and 5-acetylblennolide A.</text>
</comment>
<comment type="similarity">
    <text evidence="8">Belongs to the cytochrome P450 family.</text>
</comment>
<evidence type="ECO:0000250" key="1">
    <source>
        <dbReference type="UniProtKB" id="P04798"/>
    </source>
</evidence>
<evidence type="ECO:0000255" key="2"/>
<evidence type="ECO:0000255" key="3">
    <source>
        <dbReference type="PROSITE-ProRule" id="PRU00498"/>
    </source>
</evidence>
<evidence type="ECO:0000269" key="4">
    <source>
    </source>
</evidence>
<evidence type="ECO:0000269" key="5">
    <source>
    </source>
</evidence>
<evidence type="ECO:0000269" key="6">
    <source>
    </source>
</evidence>
<evidence type="ECO:0000303" key="7">
    <source>
    </source>
</evidence>
<evidence type="ECO:0000305" key="8"/>
<evidence type="ECO:0000305" key="9">
    <source>
    </source>
</evidence>
<protein>
    <recommendedName>
        <fullName evidence="7">Cytochrome P450 monooxygenase nsrP</fullName>
        <ecNumber evidence="9">1.14.13.-</ecNumber>
    </recommendedName>
    <alternativeName>
        <fullName evidence="7">Neosartorin biosynthesis cluster protein P</fullName>
    </alternativeName>
</protein>
<dbReference type="EC" id="1.14.13.-" evidence="9"/>
<dbReference type="EMBL" id="MSZS01000005">
    <property type="protein sequence ID" value="PKX92294.1"/>
    <property type="molecule type" value="Genomic_DNA"/>
</dbReference>
<dbReference type="SMR" id="A0A2I1C3T4"/>
<dbReference type="STRING" id="1392255.A0A2I1C3T4"/>
<dbReference type="GlyCosmos" id="A0A2I1C3T4">
    <property type="glycosylation" value="3 sites, No reported glycans"/>
</dbReference>
<dbReference type="VEuPathDB" id="FungiDB:P174DRAFT_372675"/>
<dbReference type="OMA" id="ANAGYLC"/>
<dbReference type="OrthoDB" id="1055148at2759"/>
<dbReference type="Proteomes" id="UP000234474">
    <property type="component" value="Unassembled WGS sequence"/>
</dbReference>
<dbReference type="GO" id="GO:0016020">
    <property type="term" value="C:membrane"/>
    <property type="evidence" value="ECO:0007669"/>
    <property type="project" value="UniProtKB-SubCell"/>
</dbReference>
<dbReference type="GO" id="GO:0020037">
    <property type="term" value="F:heme binding"/>
    <property type="evidence" value="ECO:0007669"/>
    <property type="project" value="InterPro"/>
</dbReference>
<dbReference type="GO" id="GO:0005506">
    <property type="term" value="F:iron ion binding"/>
    <property type="evidence" value="ECO:0007669"/>
    <property type="project" value="InterPro"/>
</dbReference>
<dbReference type="GO" id="GO:0004497">
    <property type="term" value="F:monooxygenase activity"/>
    <property type="evidence" value="ECO:0007669"/>
    <property type="project" value="UniProtKB-KW"/>
</dbReference>
<dbReference type="GO" id="GO:0016705">
    <property type="term" value="F:oxidoreductase activity, acting on paired donors, with incorporation or reduction of molecular oxygen"/>
    <property type="evidence" value="ECO:0007669"/>
    <property type="project" value="InterPro"/>
</dbReference>
<dbReference type="GO" id="GO:0009058">
    <property type="term" value="P:biosynthetic process"/>
    <property type="evidence" value="ECO:0007669"/>
    <property type="project" value="UniProtKB-ARBA"/>
</dbReference>
<dbReference type="GO" id="GO:0016125">
    <property type="term" value="P:sterol metabolic process"/>
    <property type="evidence" value="ECO:0007669"/>
    <property type="project" value="TreeGrafter"/>
</dbReference>
<dbReference type="CDD" id="cd00302">
    <property type="entry name" value="cytochrome_P450"/>
    <property type="match status" value="1"/>
</dbReference>
<dbReference type="Gene3D" id="1.10.630.10">
    <property type="entry name" value="Cytochrome P450"/>
    <property type="match status" value="1"/>
</dbReference>
<dbReference type="InterPro" id="IPR001128">
    <property type="entry name" value="Cyt_P450"/>
</dbReference>
<dbReference type="InterPro" id="IPR002403">
    <property type="entry name" value="Cyt_P450_E_grp-IV"/>
</dbReference>
<dbReference type="InterPro" id="IPR036396">
    <property type="entry name" value="Cyt_P450_sf"/>
</dbReference>
<dbReference type="PANTHER" id="PTHR24286">
    <property type="entry name" value="CYTOCHROME P450 26"/>
    <property type="match status" value="1"/>
</dbReference>
<dbReference type="PANTHER" id="PTHR24286:SF24">
    <property type="entry name" value="LANOSTEROL 14-ALPHA DEMETHYLASE"/>
    <property type="match status" value="1"/>
</dbReference>
<dbReference type="Pfam" id="PF00067">
    <property type="entry name" value="p450"/>
    <property type="match status" value="1"/>
</dbReference>
<dbReference type="PRINTS" id="PR00465">
    <property type="entry name" value="EP450IV"/>
</dbReference>
<dbReference type="SUPFAM" id="SSF48264">
    <property type="entry name" value="Cytochrome P450"/>
    <property type="match status" value="1"/>
</dbReference>
<accession>A0A2I1C3T4</accession>
<organism>
    <name type="scientific">Aspergillus novofumigatus (strain IBT 16806)</name>
    <dbReference type="NCBI Taxonomy" id="1392255"/>
    <lineage>
        <taxon>Eukaryota</taxon>
        <taxon>Fungi</taxon>
        <taxon>Dikarya</taxon>
        <taxon>Ascomycota</taxon>
        <taxon>Pezizomycotina</taxon>
        <taxon>Eurotiomycetes</taxon>
        <taxon>Eurotiomycetidae</taxon>
        <taxon>Eurotiales</taxon>
        <taxon>Aspergillaceae</taxon>
        <taxon>Aspergillus</taxon>
        <taxon>Aspergillus subgen. Fumigati</taxon>
    </lineage>
</organism>